<accession>A8G3H7</accession>
<gene>
    <name evidence="1" type="primary">petC</name>
    <name type="ordered locus">P9215_05421</name>
</gene>
<comment type="function">
    <text evidence="1">Component of the cytochrome b6-f complex, which mediates electron transfer between photosystem II (PSII) and photosystem I (PSI), cyclic electron flow around PSI, and state transitions.</text>
</comment>
<comment type="catalytic activity">
    <reaction evidence="1">
        <text>2 oxidized [plastocyanin] + a plastoquinol + 2 H(+)(in) = 2 reduced [plastocyanin] + a plastoquinone + 4 H(+)(out)</text>
        <dbReference type="Rhea" id="RHEA:22148"/>
        <dbReference type="Rhea" id="RHEA-COMP:9561"/>
        <dbReference type="Rhea" id="RHEA-COMP:9562"/>
        <dbReference type="Rhea" id="RHEA-COMP:10039"/>
        <dbReference type="Rhea" id="RHEA-COMP:10040"/>
        <dbReference type="ChEBI" id="CHEBI:15378"/>
        <dbReference type="ChEBI" id="CHEBI:17757"/>
        <dbReference type="ChEBI" id="CHEBI:29036"/>
        <dbReference type="ChEBI" id="CHEBI:49552"/>
        <dbReference type="ChEBI" id="CHEBI:62192"/>
        <dbReference type="EC" id="7.1.1.6"/>
    </reaction>
</comment>
<comment type="cofactor">
    <cofactor evidence="1">
        <name>[2Fe-2S] cluster</name>
        <dbReference type="ChEBI" id="CHEBI:190135"/>
    </cofactor>
    <text evidence="1">Binds 1 [2Fe-2S] cluster per subunit.</text>
</comment>
<comment type="subunit">
    <text evidence="1">The 4 large subunits of the cytochrome b6-f complex are cytochrome b6, subunit IV (17 kDa polypeptide, PetD), cytochrome f and the Rieske protein, while the 4 small subunits are PetG, PetL, PetM and PetN. The complex functions as a dimer.</text>
</comment>
<comment type="subcellular location">
    <subcellularLocation>
        <location evidence="1">Cellular thylakoid membrane</location>
        <topology evidence="1">Single-pass membrane protein</topology>
    </subcellularLocation>
    <text evidence="1">The transmembrane helix obliquely spans the membrane in one monomer, and its extrinsic C-terminal domain is part of the other monomer.</text>
</comment>
<comment type="miscellaneous">
    <text>The Rieske iron-sulfur protein is a high potential 2Fe-2S protein.</text>
</comment>
<comment type="similarity">
    <text evidence="1">Belongs to the Rieske iron-sulfur protein family.</text>
</comment>
<organism>
    <name type="scientific">Prochlorococcus marinus (strain MIT 9215)</name>
    <dbReference type="NCBI Taxonomy" id="93060"/>
    <lineage>
        <taxon>Bacteria</taxon>
        <taxon>Bacillati</taxon>
        <taxon>Cyanobacteriota</taxon>
        <taxon>Cyanophyceae</taxon>
        <taxon>Synechococcales</taxon>
        <taxon>Prochlorococcaceae</taxon>
        <taxon>Prochlorococcus</taxon>
    </lineage>
</organism>
<reference key="1">
    <citation type="journal article" date="2007" name="PLoS Genet.">
        <title>Patterns and implications of gene gain and loss in the evolution of Prochlorococcus.</title>
        <authorList>
            <person name="Kettler G.C."/>
            <person name="Martiny A.C."/>
            <person name="Huang K."/>
            <person name="Zucker J."/>
            <person name="Coleman M.L."/>
            <person name="Rodrigue S."/>
            <person name="Chen F."/>
            <person name="Lapidus A."/>
            <person name="Ferriera S."/>
            <person name="Johnson J."/>
            <person name="Steglich C."/>
            <person name="Church G.M."/>
            <person name="Richardson P."/>
            <person name="Chisholm S.W."/>
        </authorList>
    </citation>
    <scope>NUCLEOTIDE SEQUENCE [LARGE SCALE GENOMIC DNA]</scope>
    <source>
        <strain>MIT 9215</strain>
    </source>
</reference>
<evidence type="ECO:0000255" key="1">
    <source>
        <dbReference type="HAMAP-Rule" id="MF_01335"/>
    </source>
</evidence>
<sequence>MTQLSSKDVPSMGRRQFMNLLTFGTATGVALGALYPVANYFMPLRAGGGGGGTSAKDELGNPITKTGWLATHQAGDRSLVQGLKGDPTYLIVNEGGGIGEFGLNAICTHLGCVVPWDSGANKFICPCHGSQYDTNGKVVRGPAPLSLALAHVDIEDDAVLVKQWSETDFRTNENPWWA</sequence>
<proteinExistence type="inferred from homology"/>
<keyword id="KW-0001">2Fe-2S</keyword>
<keyword id="KW-1015">Disulfide bond</keyword>
<keyword id="KW-0249">Electron transport</keyword>
<keyword id="KW-0408">Iron</keyword>
<keyword id="KW-0411">Iron-sulfur</keyword>
<keyword id="KW-0472">Membrane</keyword>
<keyword id="KW-0479">Metal-binding</keyword>
<keyword id="KW-0793">Thylakoid</keyword>
<keyword id="KW-1278">Translocase</keyword>
<keyword id="KW-0812">Transmembrane</keyword>
<keyword id="KW-1133">Transmembrane helix</keyword>
<keyword id="KW-0813">Transport</keyword>
<protein>
    <recommendedName>
        <fullName evidence="1">Cytochrome b6-f complex iron-sulfur subunit</fullName>
        <ecNumber evidence="1">7.1.1.6</ecNumber>
    </recommendedName>
    <alternativeName>
        <fullName evidence="1">Plastohydroquinone:plastocyanin oxidoreductase iron-sulfur protein</fullName>
        <shortName evidence="1">ISP</shortName>
        <shortName evidence="1">RISP</shortName>
    </alternativeName>
    <alternativeName>
        <fullName evidence="1">Rieske iron-sulfur protein</fullName>
    </alternativeName>
</protein>
<feature type="chain" id="PRO_1000067629" description="Cytochrome b6-f complex iron-sulfur subunit">
    <location>
        <begin position="1"/>
        <end position="178"/>
    </location>
</feature>
<feature type="transmembrane region" description="Helical" evidence="1">
    <location>
        <begin position="20"/>
        <end position="42"/>
    </location>
</feature>
<feature type="domain" description="Rieske" evidence="1">
    <location>
        <begin position="65"/>
        <end position="161"/>
    </location>
</feature>
<feature type="binding site" evidence="1">
    <location>
        <position position="107"/>
    </location>
    <ligand>
        <name>[2Fe-2S] cluster</name>
        <dbReference type="ChEBI" id="CHEBI:190135"/>
    </ligand>
</feature>
<feature type="binding site" evidence="1">
    <location>
        <position position="109"/>
    </location>
    <ligand>
        <name>[2Fe-2S] cluster</name>
        <dbReference type="ChEBI" id="CHEBI:190135"/>
    </ligand>
</feature>
<feature type="binding site" evidence="1">
    <location>
        <position position="125"/>
    </location>
    <ligand>
        <name>[2Fe-2S] cluster</name>
        <dbReference type="ChEBI" id="CHEBI:190135"/>
    </ligand>
</feature>
<feature type="binding site" evidence="1">
    <location>
        <position position="128"/>
    </location>
    <ligand>
        <name>[2Fe-2S] cluster</name>
        <dbReference type="ChEBI" id="CHEBI:190135"/>
    </ligand>
</feature>
<feature type="disulfide bond" evidence="1">
    <location>
        <begin position="112"/>
        <end position="127"/>
    </location>
</feature>
<dbReference type="EC" id="7.1.1.6" evidence="1"/>
<dbReference type="EMBL" id="CP000825">
    <property type="protein sequence ID" value="ABV50158.1"/>
    <property type="molecule type" value="Genomic_DNA"/>
</dbReference>
<dbReference type="RefSeq" id="WP_012007289.1">
    <property type="nucleotide sequence ID" value="NC_009840.1"/>
</dbReference>
<dbReference type="SMR" id="A8G3H7"/>
<dbReference type="STRING" id="93060.P9215_05421"/>
<dbReference type="KEGG" id="pmh:P9215_05421"/>
<dbReference type="eggNOG" id="COG0723">
    <property type="taxonomic scope" value="Bacteria"/>
</dbReference>
<dbReference type="HOGENOM" id="CLU_055690_8_0_3"/>
<dbReference type="OrthoDB" id="9767869at2"/>
<dbReference type="Proteomes" id="UP000002014">
    <property type="component" value="Chromosome"/>
</dbReference>
<dbReference type="GO" id="GO:0031676">
    <property type="term" value="C:plasma membrane-derived thylakoid membrane"/>
    <property type="evidence" value="ECO:0007669"/>
    <property type="project" value="UniProtKB-SubCell"/>
</dbReference>
<dbReference type="GO" id="GO:0051537">
    <property type="term" value="F:2 iron, 2 sulfur cluster binding"/>
    <property type="evidence" value="ECO:0007669"/>
    <property type="project" value="UniProtKB-KW"/>
</dbReference>
<dbReference type="GO" id="GO:0045158">
    <property type="term" value="F:electron transporter, transferring electrons within cytochrome b6/f complex of photosystem II activity"/>
    <property type="evidence" value="ECO:0007669"/>
    <property type="project" value="UniProtKB-UniRule"/>
</dbReference>
<dbReference type="GO" id="GO:0046872">
    <property type="term" value="F:metal ion binding"/>
    <property type="evidence" value="ECO:0007669"/>
    <property type="project" value="UniProtKB-KW"/>
</dbReference>
<dbReference type="GO" id="GO:0004497">
    <property type="term" value="F:monooxygenase activity"/>
    <property type="evidence" value="ECO:0007669"/>
    <property type="project" value="UniProtKB-ARBA"/>
</dbReference>
<dbReference type="GO" id="GO:0016705">
    <property type="term" value="F:oxidoreductase activity, acting on paired donors, with incorporation or reduction of molecular oxygen"/>
    <property type="evidence" value="ECO:0007669"/>
    <property type="project" value="UniProtKB-ARBA"/>
</dbReference>
<dbReference type="GO" id="GO:0009496">
    <property type="term" value="F:plastoquinol--plastocyanin reductase activity"/>
    <property type="evidence" value="ECO:0007669"/>
    <property type="project" value="UniProtKB-UniRule"/>
</dbReference>
<dbReference type="GO" id="GO:0015979">
    <property type="term" value="P:photosynthesis"/>
    <property type="evidence" value="ECO:0007669"/>
    <property type="project" value="UniProtKB-UniRule"/>
</dbReference>
<dbReference type="CDD" id="cd03471">
    <property type="entry name" value="Rieske_cytochrome_b6f"/>
    <property type="match status" value="1"/>
</dbReference>
<dbReference type="FunFam" id="2.102.10.10:FF:000007">
    <property type="entry name" value="Cytochrome b6-f complex iron-sulfur subunit"/>
    <property type="match status" value="1"/>
</dbReference>
<dbReference type="Gene3D" id="2.102.10.10">
    <property type="entry name" value="Rieske [2Fe-2S] iron-sulphur domain"/>
    <property type="match status" value="1"/>
</dbReference>
<dbReference type="Gene3D" id="1.20.5.700">
    <property type="entry name" value="Single helix bin"/>
    <property type="match status" value="1"/>
</dbReference>
<dbReference type="HAMAP" id="MF_01335">
    <property type="entry name" value="Cytb6_f_Rieske"/>
    <property type="match status" value="1"/>
</dbReference>
<dbReference type="InterPro" id="IPR023960">
    <property type="entry name" value="Cyt_b6_f_Rieske"/>
</dbReference>
<dbReference type="InterPro" id="IPR017941">
    <property type="entry name" value="Rieske_2Fe-2S"/>
</dbReference>
<dbReference type="InterPro" id="IPR036922">
    <property type="entry name" value="Rieske_2Fe-2S_sf"/>
</dbReference>
<dbReference type="InterPro" id="IPR014349">
    <property type="entry name" value="Rieske_Fe-S_prot"/>
</dbReference>
<dbReference type="InterPro" id="IPR005805">
    <property type="entry name" value="Rieske_Fe-S_prot_C"/>
</dbReference>
<dbReference type="InterPro" id="IPR006311">
    <property type="entry name" value="TAT_signal"/>
</dbReference>
<dbReference type="NCBIfam" id="NF045928">
    <property type="entry name" value="Cytb6fFeSPetC"/>
    <property type="match status" value="1"/>
</dbReference>
<dbReference type="NCBIfam" id="NF010001">
    <property type="entry name" value="PRK13474.1"/>
    <property type="match status" value="1"/>
</dbReference>
<dbReference type="PANTHER" id="PTHR10134">
    <property type="entry name" value="CYTOCHROME B-C1 COMPLEX SUBUNIT RIESKE, MITOCHONDRIAL"/>
    <property type="match status" value="1"/>
</dbReference>
<dbReference type="Pfam" id="PF00355">
    <property type="entry name" value="Rieske"/>
    <property type="match status" value="1"/>
</dbReference>
<dbReference type="Pfam" id="PF25471">
    <property type="entry name" value="TM_PetC"/>
    <property type="match status" value="1"/>
</dbReference>
<dbReference type="PRINTS" id="PR00162">
    <property type="entry name" value="RIESKE"/>
</dbReference>
<dbReference type="SUPFAM" id="SSF50022">
    <property type="entry name" value="ISP domain"/>
    <property type="match status" value="1"/>
</dbReference>
<dbReference type="PROSITE" id="PS51296">
    <property type="entry name" value="RIESKE"/>
    <property type="match status" value="1"/>
</dbReference>
<dbReference type="PROSITE" id="PS51318">
    <property type="entry name" value="TAT"/>
    <property type="match status" value="1"/>
</dbReference>
<name>UCRI_PROM2</name>